<keyword id="KW-0406">Ion transport</keyword>
<keyword id="KW-0472">Membrane</keyword>
<keyword id="KW-0496">Mitochondrion</keyword>
<keyword id="KW-1000">Mitochondrion outer membrane</keyword>
<keyword id="KW-0626">Porin</keyword>
<keyword id="KW-1185">Reference proteome</keyword>
<keyword id="KW-0812">Transmembrane</keyword>
<keyword id="KW-1134">Transmembrane beta strand</keyword>
<keyword id="KW-0813">Transport</keyword>
<comment type="function">
    <text evidence="1 2">Forms a channel through the cell membrane that allows diffusion of small hydrophilic molecules (By similarity). Plays a role in maintaining mitochondrial morphology (PubMed:25190516).</text>
</comment>
<comment type="subcellular location">
    <subcellularLocation>
        <location evidence="1">Mitochondrion outer membrane</location>
        <topology evidence="1">Multi-pass membrane protein</topology>
    </subcellularLocation>
</comment>
<comment type="domain">
    <text evidence="1">Consists mainly of membrane-spanning sided beta-sheets.</text>
</comment>
<comment type="disruption phenotype">
    <text evidence="2">RNAi-mediated knockdown results in a hyper-connected mitochondrial network in body wall muscle cells.</text>
</comment>
<comment type="similarity">
    <text evidence="3">Belongs to the eukaryotic mitochondrial porin family.</text>
</comment>
<reference key="1">
    <citation type="journal article" date="1998" name="Science">
        <title>Genome sequence of the nematode C. elegans: a platform for investigating biology.</title>
        <authorList>
            <consortium name="The C. elegans sequencing consortium"/>
        </authorList>
    </citation>
    <scope>NUCLEOTIDE SEQUENCE [LARGE SCALE GENOMIC DNA]</scope>
    <source>
        <strain>Bristol N2</strain>
    </source>
</reference>
<reference key="2">
    <citation type="journal article" date="2014" name="EMBO J.">
        <title>The small GTPase Arf1 modulates mitochondrial morphology and function.</title>
        <authorList>
            <person name="Ackema K.B."/>
            <person name="Hench J."/>
            <person name="Boeckler S."/>
            <person name="Wang S.C."/>
            <person name="Sauder U."/>
            <person name="Mergentaler H."/>
            <person name="Westermann B."/>
            <person name="Bard F."/>
            <person name="Frank S."/>
            <person name="Spang A."/>
        </authorList>
    </citation>
    <scope>FUNCTION</scope>
    <scope>DISRUPTION PHENOTYPE</scope>
</reference>
<evidence type="ECO:0000250" key="1">
    <source>
        <dbReference type="UniProtKB" id="P21796"/>
    </source>
</evidence>
<evidence type="ECO:0000269" key="2">
    <source>
    </source>
</evidence>
<evidence type="ECO:0000305" key="3"/>
<evidence type="ECO:0000312" key="4">
    <source>
        <dbReference type="WormBase" id="R05G6.7"/>
    </source>
</evidence>
<protein>
    <recommendedName>
        <fullName>Probable voltage-dependent anion-selective channel</fullName>
    </recommendedName>
</protein>
<organism>
    <name type="scientific">Caenorhabditis elegans</name>
    <dbReference type="NCBI Taxonomy" id="6239"/>
    <lineage>
        <taxon>Eukaryota</taxon>
        <taxon>Metazoa</taxon>
        <taxon>Ecdysozoa</taxon>
        <taxon>Nematoda</taxon>
        <taxon>Chromadorea</taxon>
        <taxon>Rhabditida</taxon>
        <taxon>Rhabditina</taxon>
        <taxon>Rhabditomorpha</taxon>
        <taxon>Rhabditoidea</taxon>
        <taxon>Rhabditidae</taxon>
        <taxon>Peloderinae</taxon>
        <taxon>Caenorhabditis</taxon>
    </lineage>
</organism>
<feature type="chain" id="PRO_0000050521" description="Probable voltage-dependent anion-selective channel">
    <location>
        <begin position="1"/>
        <end position="283"/>
    </location>
</feature>
<dbReference type="EMBL" id="BX284604">
    <property type="protein sequence ID" value="CCD71556.1"/>
    <property type="molecule type" value="Genomic_DNA"/>
</dbReference>
<dbReference type="PIR" id="T29355">
    <property type="entry name" value="T29355"/>
</dbReference>
<dbReference type="RefSeq" id="NP_501211.1">
    <property type="nucleotide sequence ID" value="NM_068810.9"/>
</dbReference>
<dbReference type="SMR" id="Q21752"/>
<dbReference type="BioGRID" id="42642">
    <property type="interactions" value="37"/>
</dbReference>
<dbReference type="FunCoup" id="Q21752">
    <property type="interactions" value="2071"/>
</dbReference>
<dbReference type="IntAct" id="Q21752">
    <property type="interactions" value="1"/>
</dbReference>
<dbReference type="STRING" id="6239.R05G6.7.1"/>
<dbReference type="PaxDb" id="6239-R05G6.7"/>
<dbReference type="PeptideAtlas" id="Q21752"/>
<dbReference type="EnsemblMetazoa" id="R05G6.7.1">
    <property type="protein sequence ID" value="R05G6.7.1"/>
    <property type="gene ID" value="WBGene00019900"/>
</dbReference>
<dbReference type="GeneID" id="177524"/>
<dbReference type="KEGG" id="cel:CELE_R05G6.7"/>
<dbReference type="UCSC" id="R05G6.7.1">
    <property type="organism name" value="c. elegans"/>
</dbReference>
<dbReference type="AGR" id="WB:WBGene00019900"/>
<dbReference type="CTD" id="177524"/>
<dbReference type="WormBase" id="R05G6.7">
    <property type="protein sequence ID" value="CE29443"/>
    <property type="gene ID" value="WBGene00019900"/>
    <property type="gene designation" value="vdac-1"/>
</dbReference>
<dbReference type="eggNOG" id="KOG3126">
    <property type="taxonomic scope" value="Eukaryota"/>
</dbReference>
<dbReference type="GeneTree" id="ENSGT00950000182869"/>
<dbReference type="HOGENOM" id="CLU_044399_2_0_1"/>
<dbReference type="InParanoid" id="Q21752"/>
<dbReference type="OMA" id="MAPPCYA"/>
<dbReference type="OrthoDB" id="7827681at2759"/>
<dbReference type="PhylomeDB" id="Q21752"/>
<dbReference type="Reactome" id="R-CEL-5205685">
    <property type="pathway name" value="PINK1-PRKN Mediated Mitophagy"/>
</dbReference>
<dbReference type="Reactome" id="R-CEL-5689880">
    <property type="pathway name" value="Ub-specific processing proteases"/>
</dbReference>
<dbReference type="Reactome" id="R-CEL-70268">
    <property type="pathway name" value="Pyruvate metabolism"/>
</dbReference>
<dbReference type="PRO" id="PR:Q21752"/>
<dbReference type="Proteomes" id="UP000001940">
    <property type="component" value="Chromosome IV"/>
</dbReference>
<dbReference type="Bgee" id="WBGene00019900">
    <property type="expression patterns" value="Expressed in embryo and 4 other cell types or tissues"/>
</dbReference>
<dbReference type="GO" id="GO:0005741">
    <property type="term" value="C:mitochondrial outer membrane"/>
    <property type="evidence" value="ECO:0000318"/>
    <property type="project" value="GO_Central"/>
</dbReference>
<dbReference type="GO" id="GO:0005739">
    <property type="term" value="C:mitochondrion"/>
    <property type="evidence" value="ECO:0000314"/>
    <property type="project" value="WormBase"/>
</dbReference>
<dbReference type="GO" id="GO:0046930">
    <property type="term" value="C:pore complex"/>
    <property type="evidence" value="ECO:0007669"/>
    <property type="project" value="UniProtKB-KW"/>
</dbReference>
<dbReference type="GO" id="GO:0015288">
    <property type="term" value="F:porin activity"/>
    <property type="evidence" value="ECO:0007669"/>
    <property type="project" value="UniProtKB-KW"/>
</dbReference>
<dbReference type="GO" id="GO:0008308">
    <property type="term" value="F:voltage-gated monoatomic anion channel activity"/>
    <property type="evidence" value="ECO:0000318"/>
    <property type="project" value="GO_Central"/>
</dbReference>
<dbReference type="GO" id="GO:0007005">
    <property type="term" value="P:mitochondrion organization"/>
    <property type="evidence" value="ECO:0000315"/>
    <property type="project" value="WormBase"/>
</dbReference>
<dbReference type="GO" id="GO:0042048">
    <property type="term" value="P:olfactory behavior"/>
    <property type="evidence" value="ECO:0000315"/>
    <property type="project" value="WormBase"/>
</dbReference>
<dbReference type="CDD" id="cd07306">
    <property type="entry name" value="Porin3_VDAC"/>
    <property type="match status" value="1"/>
</dbReference>
<dbReference type="FunFam" id="2.40.160.10:FF:000012">
    <property type="entry name" value="Voltage-dependent anion-selective channel"/>
    <property type="match status" value="1"/>
</dbReference>
<dbReference type="Gene3D" id="2.40.160.10">
    <property type="entry name" value="Porin"/>
    <property type="match status" value="1"/>
</dbReference>
<dbReference type="InterPro" id="IPR023614">
    <property type="entry name" value="Porin_dom_sf"/>
</dbReference>
<dbReference type="InterPro" id="IPR001925">
    <property type="entry name" value="Porin_Euk"/>
</dbReference>
<dbReference type="InterPro" id="IPR027246">
    <property type="entry name" value="Porin_Euk/Tom40"/>
</dbReference>
<dbReference type="PANTHER" id="PTHR11743:SF70">
    <property type="entry name" value="GH26960P-RELATED"/>
    <property type="match status" value="1"/>
</dbReference>
<dbReference type="PANTHER" id="PTHR11743">
    <property type="entry name" value="VOLTAGE-DEPENDENT ANION-SELECTIVE CHANNEL"/>
    <property type="match status" value="1"/>
</dbReference>
<dbReference type="Pfam" id="PF01459">
    <property type="entry name" value="Porin_3"/>
    <property type="match status" value="1"/>
</dbReference>
<dbReference type="PRINTS" id="PR00185">
    <property type="entry name" value="EUKARYTPORIN"/>
</dbReference>
<name>VDAC_CAEEL</name>
<gene>
    <name evidence="4" type="primary">vdac-1</name>
    <name evidence="4" type="ORF">R05G6.7</name>
</gene>
<proteinExistence type="inferred from homology"/>
<sequence length="283" mass="29961">MAPPTFADLGKSAKDLFNKGYNFGFLKIDSTTRAGDNKEVEFKSAASHNIGSGKLGGNLDVKYKIPQYGITLTEKWNTENQLGTVIEVNEQFGRGLKVTLDSLYAPHAGKRSGKVKLDWALPTARVTADVGVTSAPVINAAGVFSRDGWLIGAAATFDSSSNKLAATSLAFGHSTPQYTLHSFVINSTDFGASLYHKVASNVEVGTQLGWKVGGNGADYALATKYAPSRDLTVRAKVNSSSQVAVAATHSLSPALKLTLSTQFNLAANDAHKFGLGLEFDPSN</sequence>
<accession>Q21752</accession>